<gene>
    <name type="primary">KRT18</name>
    <name type="synonym">CYK18</name>
    <name type="ORF">PIG46</name>
</gene>
<organism>
    <name type="scientific">Homo sapiens</name>
    <name type="common">Human</name>
    <dbReference type="NCBI Taxonomy" id="9606"/>
    <lineage>
        <taxon>Eukaryota</taxon>
        <taxon>Metazoa</taxon>
        <taxon>Chordata</taxon>
        <taxon>Craniata</taxon>
        <taxon>Vertebrata</taxon>
        <taxon>Euteleostomi</taxon>
        <taxon>Mammalia</taxon>
        <taxon>Eutheria</taxon>
        <taxon>Euarchontoglires</taxon>
        <taxon>Primates</taxon>
        <taxon>Haplorrhini</taxon>
        <taxon>Catarrhini</taxon>
        <taxon>Hominidae</taxon>
        <taxon>Homo</taxon>
    </lineage>
</organism>
<name>K1C18_HUMAN</name>
<accession>P05783</accession>
<accession>Q53G38</accession>
<accession>Q5U0N8</accession>
<accession>Q9BW26</accession>
<dbReference type="EMBL" id="X12881">
    <property type="protein sequence ID" value="CAA31375.1"/>
    <property type="molecule type" value="mRNA"/>
</dbReference>
<dbReference type="EMBL" id="AY762101">
    <property type="protein sequence ID" value="AAX07828.1"/>
    <property type="molecule type" value="mRNA"/>
</dbReference>
<dbReference type="EMBL" id="BT019412">
    <property type="protein sequence ID" value="AAV38219.1"/>
    <property type="molecule type" value="mRNA"/>
</dbReference>
<dbReference type="EMBL" id="AK223093">
    <property type="protein sequence ID" value="BAD96813.1"/>
    <property type="molecule type" value="mRNA"/>
</dbReference>
<dbReference type="EMBL" id="BC000180">
    <property type="protein sequence ID" value="AAH00180.1"/>
    <property type="molecule type" value="mRNA"/>
</dbReference>
<dbReference type="EMBL" id="BC000698">
    <property type="protein sequence ID" value="AAH00698.1"/>
    <property type="molecule type" value="mRNA"/>
</dbReference>
<dbReference type="EMBL" id="BC004253">
    <property type="protein sequence ID" value="AAH04253.1"/>
    <property type="molecule type" value="mRNA"/>
</dbReference>
<dbReference type="EMBL" id="BC008636">
    <property type="protein sequence ID" value="AAH08636.1"/>
    <property type="molecule type" value="mRNA"/>
</dbReference>
<dbReference type="EMBL" id="BC020982">
    <property type="protein sequence ID" value="AAH20982.1"/>
    <property type="molecule type" value="mRNA"/>
</dbReference>
<dbReference type="EMBL" id="BC072017">
    <property type="protein sequence ID" value="AAH72017.1"/>
    <property type="molecule type" value="mRNA"/>
</dbReference>
<dbReference type="EMBL" id="AF179904">
    <property type="protein sequence ID" value="AAA59461.1"/>
    <property type="molecule type" value="Genomic_DNA"/>
</dbReference>
<dbReference type="EMBL" id="X12883">
    <property type="protein sequence ID" value="CAA31377.1"/>
    <property type="molecule type" value="mRNA"/>
</dbReference>
<dbReference type="EMBL" id="X12876">
    <property type="protein sequence ID" value="CAA31369.1"/>
    <property type="molecule type" value="mRNA"/>
</dbReference>
<dbReference type="CCDS" id="CCDS31809.1"/>
<dbReference type="PIR" id="S05481">
    <property type="entry name" value="S05481"/>
</dbReference>
<dbReference type="RefSeq" id="NP_000215.1">
    <property type="nucleotide sequence ID" value="NM_000224.3"/>
</dbReference>
<dbReference type="RefSeq" id="NP_954657.1">
    <property type="nucleotide sequence ID" value="NM_199187.2"/>
</dbReference>
<dbReference type="SMR" id="P05783"/>
<dbReference type="BioGRID" id="110073">
    <property type="interactions" value="420"/>
</dbReference>
<dbReference type="ComplexPortal" id="CPX-5661">
    <property type="entry name" value="Keratin-8 - Keratin-18 dimer complex"/>
</dbReference>
<dbReference type="DIP" id="DIP-633N"/>
<dbReference type="FunCoup" id="P05783">
    <property type="interactions" value="187"/>
</dbReference>
<dbReference type="IntAct" id="P05783">
    <property type="interactions" value="125"/>
</dbReference>
<dbReference type="MINT" id="P05783"/>
<dbReference type="STRING" id="9606.ENSP00000373489"/>
<dbReference type="GlyConnect" id="312">
    <property type="glycosylation" value="3 N-Linked glycans (1 site), 1 O-GlcNAc glycan (2 sites)"/>
</dbReference>
<dbReference type="GlyCosmos" id="P05783">
    <property type="glycosylation" value="7 sites, 3 glycans"/>
</dbReference>
<dbReference type="GlyGen" id="P05783">
    <property type="glycosylation" value="18 sites, 4 N-linked glycans (2 sites), 2 O-linked glycans (16 sites)"/>
</dbReference>
<dbReference type="iPTMnet" id="P05783"/>
<dbReference type="MetOSite" id="P05783"/>
<dbReference type="PhosphoSitePlus" id="P05783"/>
<dbReference type="SwissPalm" id="P05783"/>
<dbReference type="BioMuta" id="KRT18"/>
<dbReference type="DMDM" id="125083"/>
<dbReference type="CPTAC" id="CPTAC-1518"/>
<dbReference type="CPTAC" id="CPTAC-1519"/>
<dbReference type="jPOST" id="P05783"/>
<dbReference type="MassIVE" id="P05783"/>
<dbReference type="PaxDb" id="9606-ENSP00000373487"/>
<dbReference type="PeptideAtlas" id="P05783"/>
<dbReference type="PRIDE" id="P05783"/>
<dbReference type="ProteomicsDB" id="51857"/>
<dbReference type="TopDownProteomics" id="P05783"/>
<dbReference type="ABCD" id="P05783">
    <property type="antibodies" value="4 sequenced antibodies"/>
</dbReference>
<dbReference type="Antibodypedia" id="271">
    <property type="antibodies" value="3760 antibodies from 58 providers"/>
</dbReference>
<dbReference type="DNASU" id="3875"/>
<dbReference type="Ensembl" id="ENST00000388835.4">
    <property type="protein sequence ID" value="ENSP00000373487.3"/>
    <property type="gene ID" value="ENSG00000111057.11"/>
</dbReference>
<dbReference type="Ensembl" id="ENST00000388837.6">
    <property type="protein sequence ID" value="ENSP00000373489.2"/>
    <property type="gene ID" value="ENSG00000111057.11"/>
</dbReference>
<dbReference type="GeneID" id="3875"/>
<dbReference type="KEGG" id="hsa:3875"/>
<dbReference type="MANE-Select" id="ENST00000388835.4">
    <property type="protein sequence ID" value="ENSP00000373487.3"/>
    <property type="RefSeq nucleotide sequence ID" value="NM_000224.3"/>
    <property type="RefSeq protein sequence ID" value="NP_000215.1"/>
</dbReference>
<dbReference type="UCSC" id="uc001sbe.4">
    <property type="organism name" value="human"/>
</dbReference>
<dbReference type="AGR" id="HGNC:6430"/>
<dbReference type="CTD" id="3875"/>
<dbReference type="DisGeNET" id="3875"/>
<dbReference type="GeneCards" id="KRT18"/>
<dbReference type="HGNC" id="HGNC:6430">
    <property type="gene designation" value="KRT18"/>
</dbReference>
<dbReference type="HPA" id="ENSG00000111057">
    <property type="expression patterns" value="Low tissue specificity"/>
</dbReference>
<dbReference type="MalaCards" id="KRT18"/>
<dbReference type="MIM" id="148070">
    <property type="type" value="gene"/>
</dbReference>
<dbReference type="MIM" id="215600">
    <property type="type" value="phenotype"/>
</dbReference>
<dbReference type="neXtProt" id="NX_P05783"/>
<dbReference type="OpenTargets" id="ENSG00000111057"/>
<dbReference type="PharmGKB" id="PA30217"/>
<dbReference type="VEuPathDB" id="HostDB:ENSG00000111057"/>
<dbReference type="eggNOG" id="ENOG502QUS8">
    <property type="taxonomic scope" value="Eukaryota"/>
</dbReference>
<dbReference type="GeneTree" id="ENSGT00940000153309"/>
<dbReference type="InParanoid" id="P05783"/>
<dbReference type="OMA" id="IHSTKIV"/>
<dbReference type="OrthoDB" id="2441647at2759"/>
<dbReference type="PAN-GO" id="P05783">
    <property type="GO annotations" value="3 GO annotations based on evolutionary models"/>
</dbReference>
<dbReference type="PhylomeDB" id="P05783"/>
<dbReference type="TreeFam" id="TF332742"/>
<dbReference type="PathwayCommons" id="P05783"/>
<dbReference type="Reactome" id="R-HSA-6805567">
    <property type="pathway name" value="Keratinization"/>
</dbReference>
<dbReference type="Reactome" id="R-HSA-6809371">
    <property type="pathway name" value="Formation of the cornified envelope"/>
</dbReference>
<dbReference type="SignaLink" id="P05783"/>
<dbReference type="SIGNOR" id="P05783"/>
<dbReference type="BioGRID-ORCS" id="3875">
    <property type="hits" value="105 hits in 1166 CRISPR screens"/>
</dbReference>
<dbReference type="CD-CODE" id="91857CE7">
    <property type="entry name" value="Nucleolus"/>
</dbReference>
<dbReference type="ChiTaRS" id="KRT18">
    <property type="organism name" value="human"/>
</dbReference>
<dbReference type="GeneWiki" id="Keratin_18"/>
<dbReference type="GenomeRNAi" id="3875"/>
<dbReference type="Pharos" id="P05783">
    <property type="development level" value="Tbio"/>
</dbReference>
<dbReference type="PRO" id="PR:P05783"/>
<dbReference type="Proteomes" id="UP000005640">
    <property type="component" value="Chromosome 12"/>
</dbReference>
<dbReference type="RNAct" id="P05783">
    <property type="molecule type" value="protein"/>
</dbReference>
<dbReference type="Bgee" id="ENSG00000111057">
    <property type="expression patterns" value="Expressed in endometrium epithelium and 173 other cell types or tissues"/>
</dbReference>
<dbReference type="ExpressionAtlas" id="P05783">
    <property type="expression patterns" value="baseline and differential"/>
</dbReference>
<dbReference type="GO" id="GO:0005912">
    <property type="term" value="C:adherens junction"/>
    <property type="evidence" value="ECO:0007005"/>
    <property type="project" value="BHF-UCL"/>
</dbReference>
<dbReference type="GO" id="GO:0071944">
    <property type="term" value="C:cell periphery"/>
    <property type="evidence" value="ECO:0007669"/>
    <property type="project" value="Ensembl"/>
</dbReference>
<dbReference type="GO" id="GO:0034451">
    <property type="term" value="C:centriolar satellite"/>
    <property type="evidence" value="ECO:0000314"/>
    <property type="project" value="BHF-UCL"/>
</dbReference>
<dbReference type="GO" id="GO:0005737">
    <property type="term" value="C:cytoplasm"/>
    <property type="evidence" value="ECO:0000314"/>
    <property type="project" value="UniProtKB"/>
</dbReference>
<dbReference type="GO" id="GO:0005856">
    <property type="term" value="C:cytoskeleton"/>
    <property type="evidence" value="ECO:0000318"/>
    <property type="project" value="GO_Central"/>
</dbReference>
<dbReference type="GO" id="GO:0005829">
    <property type="term" value="C:cytosol"/>
    <property type="evidence" value="ECO:0000314"/>
    <property type="project" value="HPA"/>
</dbReference>
<dbReference type="GO" id="GO:0070062">
    <property type="term" value="C:extracellular exosome"/>
    <property type="evidence" value="ECO:0007005"/>
    <property type="project" value="UniProtKB"/>
</dbReference>
<dbReference type="GO" id="GO:0005882">
    <property type="term" value="C:intermediate filament"/>
    <property type="evidence" value="ECO:0000314"/>
    <property type="project" value="BHF-UCL"/>
</dbReference>
<dbReference type="GO" id="GO:0045095">
    <property type="term" value="C:keratin filament"/>
    <property type="evidence" value="ECO:0000314"/>
    <property type="project" value="UniProtKB"/>
</dbReference>
<dbReference type="GO" id="GO:0005815">
    <property type="term" value="C:microtubule organizing center"/>
    <property type="evidence" value="ECO:0000314"/>
    <property type="project" value="BHF-UCL"/>
</dbReference>
<dbReference type="GO" id="GO:0016363">
    <property type="term" value="C:nuclear matrix"/>
    <property type="evidence" value="ECO:0007669"/>
    <property type="project" value="UniProtKB-SubCell"/>
</dbReference>
<dbReference type="GO" id="GO:0005730">
    <property type="term" value="C:nucleolus"/>
    <property type="evidence" value="ECO:0007669"/>
    <property type="project" value="UniProtKB-SubCell"/>
</dbReference>
<dbReference type="GO" id="GO:0048471">
    <property type="term" value="C:perinuclear region of cytoplasm"/>
    <property type="evidence" value="ECO:0007669"/>
    <property type="project" value="UniProtKB-SubCell"/>
</dbReference>
<dbReference type="GO" id="GO:0098641">
    <property type="term" value="F:cadherin binding involved in cell-cell adhesion"/>
    <property type="evidence" value="ECO:0007005"/>
    <property type="project" value="BHF-UCL"/>
</dbReference>
<dbReference type="GO" id="GO:0003723">
    <property type="term" value="F:RNA binding"/>
    <property type="evidence" value="ECO:0007005"/>
    <property type="project" value="UniProtKB"/>
</dbReference>
<dbReference type="GO" id="GO:0097110">
    <property type="term" value="F:scaffold protein binding"/>
    <property type="evidence" value="ECO:0000353"/>
    <property type="project" value="BHF-UCL"/>
</dbReference>
<dbReference type="GO" id="GO:0005198">
    <property type="term" value="F:structural molecule activity"/>
    <property type="evidence" value="ECO:0007669"/>
    <property type="project" value="InterPro"/>
</dbReference>
<dbReference type="GO" id="GO:0009653">
    <property type="term" value="P:anatomical structure morphogenesis"/>
    <property type="evidence" value="ECO:0000304"/>
    <property type="project" value="ProtInc"/>
</dbReference>
<dbReference type="GO" id="GO:0097191">
    <property type="term" value="P:extrinsic apoptotic signaling pathway"/>
    <property type="evidence" value="ECO:0007669"/>
    <property type="project" value="Ensembl"/>
</dbReference>
<dbReference type="GO" id="GO:0043001">
    <property type="term" value="P:Golgi to plasma membrane protein transport"/>
    <property type="evidence" value="ECO:0000314"/>
    <property type="project" value="UniProtKB"/>
</dbReference>
<dbReference type="GO" id="GO:0097284">
    <property type="term" value="P:hepatocyte apoptotic process"/>
    <property type="evidence" value="ECO:0007669"/>
    <property type="project" value="Ensembl"/>
</dbReference>
<dbReference type="GO" id="GO:0045104">
    <property type="term" value="P:intermediate filament cytoskeleton organization"/>
    <property type="evidence" value="ECO:0000314"/>
    <property type="project" value="UniProtKB"/>
</dbReference>
<dbReference type="GO" id="GO:0043066">
    <property type="term" value="P:negative regulation of apoptotic process"/>
    <property type="evidence" value="ECO:0000314"/>
    <property type="project" value="UniProtKB"/>
</dbReference>
<dbReference type="GO" id="GO:0033209">
    <property type="term" value="P:tumor necrosis factor-mediated signaling pathway"/>
    <property type="evidence" value="ECO:0007669"/>
    <property type="project" value="Ensembl"/>
</dbReference>
<dbReference type="FunFam" id="1.20.5.1160:FF:000002">
    <property type="entry name" value="Type I keratin 10"/>
    <property type="match status" value="1"/>
</dbReference>
<dbReference type="FunFam" id="1.20.5.170:FF:000002">
    <property type="entry name" value="Type I keratin KA11"/>
    <property type="match status" value="1"/>
</dbReference>
<dbReference type="FunFam" id="1.20.5.500:FF:000001">
    <property type="entry name" value="Type II keratin 23"/>
    <property type="match status" value="1"/>
</dbReference>
<dbReference type="Gene3D" id="1.20.5.170">
    <property type="match status" value="1"/>
</dbReference>
<dbReference type="Gene3D" id="1.20.5.500">
    <property type="entry name" value="Single helix bin"/>
    <property type="match status" value="1"/>
</dbReference>
<dbReference type="Gene3D" id="1.20.5.1160">
    <property type="entry name" value="Vasodilator-stimulated phosphoprotein"/>
    <property type="match status" value="1"/>
</dbReference>
<dbReference type="InterPro" id="IPR018039">
    <property type="entry name" value="IF_conserved"/>
</dbReference>
<dbReference type="InterPro" id="IPR039008">
    <property type="entry name" value="IF_rod_dom"/>
</dbReference>
<dbReference type="InterPro" id="IPR002957">
    <property type="entry name" value="Keratin_I"/>
</dbReference>
<dbReference type="PANTHER" id="PTHR23239">
    <property type="entry name" value="INTERMEDIATE FILAMENT"/>
    <property type="match status" value="1"/>
</dbReference>
<dbReference type="PANTHER" id="PTHR23239:SF349">
    <property type="entry name" value="KERATIN, TYPE I CYTOSKELETAL 18"/>
    <property type="match status" value="1"/>
</dbReference>
<dbReference type="Pfam" id="PF00038">
    <property type="entry name" value="Filament"/>
    <property type="match status" value="1"/>
</dbReference>
<dbReference type="PRINTS" id="PR01248">
    <property type="entry name" value="TYPE1KERATIN"/>
</dbReference>
<dbReference type="SMART" id="SM01391">
    <property type="entry name" value="Filament"/>
    <property type="match status" value="1"/>
</dbReference>
<dbReference type="SUPFAM" id="SSF64593">
    <property type="entry name" value="Intermediate filament protein, coiled coil region"/>
    <property type="match status" value="2"/>
</dbReference>
<dbReference type="PROSITE" id="PS00226">
    <property type="entry name" value="IF_ROD_1"/>
    <property type="match status" value="1"/>
</dbReference>
<dbReference type="PROSITE" id="PS51842">
    <property type="entry name" value="IF_ROD_2"/>
    <property type="match status" value="1"/>
</dbReference>
<reference key="1">
    <citation type="journal article" date="1986" name="Differentiation">
        <title>Comparison of mouse and human keratin 18: a component of intermediate filaments expressed prior to implantation.</title>
        <authorList>
            <person name="Oshima R.G."/>
            <person name="Millan J.L."/>
            <person name="Cecena G."/>
        </authorList>
    </citation>
    <scope>NUCLEOTIDE SEQUENCE [MRNA]</scope>
    <scope>TISSUE SPECIFICITY</scope>
    <source>
        <tissue>Placenta</tissue>
    </source>
</reference>
<reference key="2">
    <citation type="submission" date="2004-09" db="EMBL/GenBank/DDBJ databases">
        <title>Identification of a cell proliferation-inducing gene.</title>
        <authorList>
            <person name="Kim J.W."/>
        </authorList>
    </citation>
    <scope>NUCLEOTIDE SEQUENCE [LARGE SCALE MRNA]</scope>
</reference>
<reference key="3">
    <citation type="submission" date="2004-10" db="EMBL/GenBank/DDBJ databases">
        <title>Cloning of human full-length CDSs in BD Creator(TM) system donor vector.</title>
        <authorList>
            <person name="Kalnine N."/>
            <person name="Chen X."/>
            <person name="Rolfs A."/>
            <person name="Halleck A."/>
            <person name="Hines L."/>
            <person name="Eisenstein S."/>
            <person name="Koundinya M."/>
            <person name="Raphael J."/>
            <person name="Moreira D."/>
            <person name="Kelley T."/>
            <person name="LaBaer J."/>
            <person name="Lin Y."/>
            <person name="Phelan M."/>
            <person name="Farmer A."/>
        </authorList>
    </citation>
    <scope>NUCLEOTIDE SEQUENCE [LARGE SCALE MRNA]</scope>
</reference>
<reference key="4">
    <citation type="submission" date="2005-04" db="EMBL/GenBank/DDBJ databases">
        <authorList>
            <person name="Suzuki Y."/>
            <person name="Sugano S."/>
            <person name="Totoki Y."/>
            <person name="Toyoda A."/>
            <person name="Takeda T."/>
            <person name="Sakaki Y."/>
            <person name="Tanaka A."/>
            <person name="Yokoyama S."/>
        </authorList>
    </citation>
    <scope>NUCLEOTIDE SEQUENCE [LARGE SCALE MRNA]</scope>
</reference>
<reference key="5">
    <citation type="journal article" date="2004" name="Genome Res.">
        <title>The status, quality, and expansion of the NIH full-length cDNA project: the Mammalian Gene Collection (MGC).</title>
        <authorList>
            <consortium name="The MGC Project Team"/>
        </authorList>
    </citation>
    <scope>NUCLEOTIDE SEQUENCE [LARGE SCALE MRNA]</scope>
    <source>
        <tissue>Cervix</tissue>
        <tissue>Colon</tissue>
        <tissue>Pancreas</tissue>
        <tissue>Placenta</tissue>
        <tissue>Uterus</tissue>
    </source>
</reference>
<reference key="6">
    <citation type="journal article" date="1988" name="Mol. Cell. Biol.">
        <title>Cloning of the human keratin 18 gene and its expression in nonepithelial mouse cells.</title>
        <authorList>
            <person name="Kulesh D.A."/>
            <person name="Oshima R.G."/>
        </authorList>
    </citation>
    <scope>NUCLEOTIDE SEQUENCE [GENOMIC DNA] OF 1-167</scope>
</reference>
<reference key="7">
    <citation type="journal article" date="1986" name="Differentiation">
        <title>Cytokeratin expression in simple epithelia. III. Detection of mRNAs encoding human cytokeratins nos. 8 and 18 in normal and tumor cells by hybridization with cDNA sequences in vitro and in situ.</title>
        <authorList>
            <person name="Leube R.E."/>
            <person name="Bosch F.X."/>
            <person name="Romano V."/>
            <person name="Zimbelmann R."/>
            <person name="Hofler H."/>
            <person name="Franke W.W."/>
        </authorList>
    </citation>
    <scope>NUCLEOTIDE SEQUENCE [MRNA] OF 7-430</scope>
    <scope>TISSUE SPECIFICITY</scope>
    <source>
        <tissue>Vulva</tissue>
    </source>
</reference>
<reference key="8">
    <citation type="journal article" date="1986" name="Differentiation">
        <title>Cytokeratin expression in simple epithelia. I. Identification of mRNA coding for human cytokeratin no. 18 by a cDNA clone.</title>
        <authorList>
            <person name="Romano V."/>
            <person name="Hatzfeld M."/>
            <person name="Magin T.M."/>
            <person name="Zimbelmann R."/>
            <person name="Franke W.W."/>
            <person name="Maier G."/>
            <person name="Ponstingl H."/>
        </authorList>
    </citation>
    <scope>NUCLEOTIDE SEQUENCE [MRNA] OF 199-430</scope>
    <scope>TISSUE SPECIFICITY</scope>
    <source>
        <tissue>Liver</tissue>
    </source>
</reference>
<reference key="9">
    <citation type="journal article" date="1997" name="Electrophoresis">
        <title>A two-dimensional gel database of human colon carcinoma proteins.</title>
        <authorList>
            <person name="Ji H."/>
            <person name="Reid G.E."/>
            <person name="Moritz R.L."/>
            <person name="Eddes J.S."/>
            <person name="Burgess A.W."/>
            <person name="Simpson R.J."/>
        </authorList>
    </citation>
    <scope>PARTIAL PROTEIN SEQUENCE</scope>
    <source>
        <tissue>Colon carcinoma</tissue>
    </source>
</reference>
<reference key="10">
    <citation type="journal article" date="1992" name="J. Biol. Chem.">
        <title>Characterization and dynamics of O-linked glycosylation of human cytokeratin 8 and 18.</title>
        <authorList>
            <person name="Chou C.F."/>
            <person name="Smith A.J."/>
            <person name="Omary M.B."/>
        </authorList>
    </citation>
    <scope>GLYCOSYLATION</scope>
</reference>
<reference key="11">
    <citation type="journal article" date="1994" name="J. Cell Biol.">
        <title>Identification of the major physiologic phosphorylation site of human keratin 18: potential kinases and a role in filament reorganization.</title>
        <authorList>
            <person name="Ku N.O."/>
            <person name="Omary M.B."/>
        </authorList>
    </citation>
    <scope>FUNCTION</scope>
    <scope>PHOSPHORYLATION AT SER-53</scope>
    <scope>MUTAGENESIS OF SER-2; SER-7; SER-10; SER-15; SER-18; SER-23; SER-30; SER-31; SER-34; SER-42; SER-44; SER-47; SER-49; SER-51 AND SER-53</scope>
</reference>
<reference key="12">
    <citation type="journal article" date="1995" name="J. Biol. Chem.">
        <title>Identification and mutational analysis of the glycosylation sites of human keratin 18.</title>
        <authorList>
            <person name="Ku N.-O."/>
            <person name="Omary M.B."/>
        </authorList>
    </citation>
    <scope>GLYCOSYLATION AT SER-30; SER-31 AND SER-49</scope>
    <scope>MUTAGENESIS OF SER-30; SER-31 AND SER-49</scope>
    <scope>CLEAVAGE OF INITIATOR METHIONINE</scope>
    <scope>ACETYLATION AT SER-2</scope>
</reference>
<reference key="13">
    <citation type="journal article" date="1995" name="J. Cell Biol.">
        <title>Chronic hepatitis, hepatocyte fragility, and increased soluble phosphoglycokeratins in transgenic mice expressing a keratin 18 conserved arginine mutant.</title>
        <authorList>
            <person name="Ku N.O."/>
            <person name="Michie S."/>
            <person name="Oshima R.G."/>
            <person name="Omary M.B."/>
        </authorList>
    </citation>
    <scope>FUNCTION</scope>
    <scope>MUTAGENESIS OF ARG-90</scope>
</reference>
<reference key="14">
    <citation type="journal article" date="1996" name="J. Cell Biol.">
        <title>14-3-3 proteins associate with phosphorylated simple epithelial keratins during cell cycle progression and act as a solubility cofactor.</title>
        <authorList>
            <person name="Liao J."/>
            <person name="Omary M.B."/>
        </authorList>
    </citation>
    <scope>PHOSPHORYLATION</scope>
    <scope>INTERACTION WITH YWHAE; YWHAH AND YWHAZ</scope>
</reference>
<reference key="15">
    <citation type="journal article" date="1997" name="J. Cell Biol.">
        <title>Caspase cleavage of keratin 18 and reorganization of intermediate filaments during epithelial cell apoptosis.</title>
        <authorList>
            <person name="Caulin C."/>
            <person name="Salvesen G.S."/>
            <person name="Oshima R.G."/>
        </authorList>
    </citation>
    <scope>FUNCTION</scope>
    <scope>CLEAVAGE BY CASPASES</scope>
    <scope>MUTAGENESIS OF SER-53 AND ASP-238</scope>
</reference>
<reference key="16">
    <citation type="journal article" date="1998" name="EMBO J.">
        <title>Phosphorylation of human keratin 18 serine 33 regulates binding to 14-3-3 proteins.</title>
        <authorList>
            <person name="Ku N.O."/>
            <person name="Liao J."/>
            <person name="Omary M.B."/>
        </authorList>
    </citation>
    <scope>FUNCTION</scope>
    <scope>INTERACTION WITH YWHAE AND YWHAZ</scope>
    <scope>PHOSPHORYLATION AT SER-34</scope>
    <scope>MUTAGENESIS OF SER-34 AND SER-53</scope>
</reference>
<reference key="17">
    <citation type="journal article" date="2000" name="J. Biol. Chem.">
        <title>Dissection of protein linkage between keratins and pinin, a protein with dual location at desmosome-intermediate filament complex and in the nucleus.</title>
        <authorList>
            <person name="Shi J."/>
            <person name="Sugrue S.P."/>
        </authorList>
    </citation>
    <scope>INTERACTION WITH PNN</scope>
</reference>
<reference key="18">
    <citation type="journal article" date="2000" name="J. Biol. Chem.">
        <title>Identification of Mrj, a DnaJ/Hsp40 family protein, as a keratin 8/18 filament regulatory protein.</title>
        <authorList>
            <person name="Izawa I."/>
            <person name="Nishizawa M."/>
            <person name="Ohtakara K."/>
            <person name="Ohtsuka K."/>
            <person name="Inada H."/>
            <person name="Inagaki M."/>
        </authorList>
    </citation>
    <scope>INTERACTION WITH DNAJB6</scope>
</reference>
<reference key="19">
    <citation type="journal article" date="2000" name="J. Cell Sci.">
        <title>Interaction of plakophilins with desmoplakin and intermediate filament proteins: an in vitro analysis.</title>
        <authorList>
            <person name="Hofmann I."/>
            <person name="Mertens C."/>
            <person name="Brettel M."/>
            <person name="Nimmrich V."/>
            <person name="Schnoelzer M."/>
            <person name="Herrmann H."/>
        </authorList>
    </citation>
    <scope>INTERACTION WITH PKP1; PKP2 AND KRT8</scope>
</reference>
<reference key="20">
    <citation type="journal article" date="2001" name="J. Cell Biol.">
        <title>Keratin attenuates tumor necrosis factor-induced cytotoxicity through association with TRADD.</title>
        <authorList>
            <person name="Inada H."/>
            <person name="Izawa I."/>
            <person name="Nishizawa M."/>
            <person name="Fujita E."/>
            <person name="Kiyono T."/>
            <person name="Takahashi T."/>
            <person name="Momoi T."/>
            <person name="Inagaki M."/>
        </authorList>
    </citation>
    <scope>INTERACTION WITH TRADD</scope>
</reference>
<reference key="21">
    <citation type="journal article" date="2004" name="Biochemistry">
        <title>Conformational changes in the rod domain of human keratin 8 following heterotypic association with keratin 18 and its implication for filament stability.</title>
        <authorList>
            <person name="Waseem A."/>
            <person name="Karsten U."/>
            <person name="Leigh I.M."/>
            <person name="Purkis P."/>
            <person name="Waseem N.H."/>
            <person name="Lane E.B."/>
        </authorList>
    </citation>
    <scope>ASSOCIATION WITH KRT8</scope>
</reference>
<reference key="22">
    <citation type="journal article" date="2004" name="Hepatology">
        <title>Keratin 8 and 18 hyperphosphorylation is a marker of progression of human liver disease.</title>
        <authorList>
            <person name="Toivola D.M."/>
            <person name="Ku N.O."/>
            <person name="Resurreccion E.Z."/>
            <person name="Nelson D.R."/>
            <person name="Wright T.L."/>
            <person name="Omary M.B."/>
        </authorList>
    </citation>
    <scope>PHOSPHORYLATION AT SER-34 AND SER-53</scope>
</reference>
<reference key="23">
    <citation type="journal article" date="2004" name="Proteomics">
        <title>Global proteomic approach unmasks involvement of keratins 8 and 18 in the delivery of cystic fibrosis transmembrane conductance regulator (CFTR)/deltaF508-CFTR to the plasma membrane.</title>
        <authorList>
            <person name="Davezac N."/>
            <person name="Tondelier D."/>
            <person name="Lipecka J."/>
            <person name="Fanen P."/>
            <person name="Demaugre F."/>
            <person name="Debski J."/>
            <person name="Dadlez M."/>
            <person name="Schrattenholz A."/>
            <person name="Cahill M.A."/>
            <person name="Edelman A."/>
        </authorList>
    </citation>
    <scope>FUNCTION</scope>
    <scope>INTERACTION WITH MUTATED CFTR</scope>
    <scope>SUBCELLULAR LOCATION</scope>
</reference>
<reference key="24">
    <citation type="journal article" date="2005" name="J. Cell Sci.">
        <title>Identification of trichoplein, a novel keratin filament-binding protein.</title>
        <authorList>
            <person name="Nishizawa M."/>
            <person name="Izawa I."/>
            <person name="Inoko A."/>
            <person name="Hayashi Y."/>
            <person name="Nagata K."/>
            <person name="Yokoyama T."/>
            <person name="Usukura J."/>
            <person name="Inagaki M."/>
        </authorList>
    </citation>
    <scope>INTERACTION WITH TCHP</scope>
</reference>
<reference key="25">
    <citation type="journal article" date="2005" name="Proteomics">
        <title>Proteomic profiling of cellular proteins interacting with the hepatitis C virus core protein.</title>
        <authorList>
            <person name="Kang S.-M."/>
            <person name="Shin M.-J."/>
            <person name="Kim J.-H."/>
            <person name="Oh J.-W."/>
        </authorList>
    </citation>
    <scope>INTERACTION WITH HEPATITIS C VIRUS CORE PROTEIN (MICROBIAL INFECTION)</scope>
</reference>
<reference key="26">
    <citation type="journal article" date="2006" name="Cell">
        <title>Global, in vivo, and site-specific phosphorylation dynamics in signaling networks.</title>
        <authorList>
            <person name="Olsen J.V."/>
            <person name="Blagoev B."/>
            <person name="Gnad F."/>
            <person name="Macek B."/>
            <person name="Kumar C."/>
            <person name="Mortensen P."/>
            <person name="Mann M."/>
        </authorList>
    </citation>
    <scope>IDENTIFICATION BY MASS SPECTROMETRY [LARGE SCALE ANALYSIS]</scope>
    <source>
        <tissue>Cervix carcinoma</tissue>
    </source>
</reference>
<reference key="27">
    <citation type="journal article" date="2006" name="J. Pharmacol. Exp. Ther.">
        <title>Rescue of DeltaF508-CFTR (cystic fibrosis transmembrane conductance regulator) by curcumin: involvement of the keratin 18 network.</title>
        <authorList>
            <person name="Lipecka J."/>
            <person name="Norez C."/>
            <person name="Bensalem N."/>
            <person name="Baudouin-Legros M."/>
            <person name="Planelles G."/>
            <person name="Becq F."/>
            <person name="Edelman A."/>
            <person name="Davezac N."/>
        </authorList>
    </citation>
    <scope>FUNCTION</scope>
    <scope>SUBCELLULAR LOCATION</scope>
    <scope>PHOSPHORYLATION AT SER-53</scope>
</reference>
<reference key="28">
    <citation type="journal article" date="2007" name="J. Biol. Chem.">
        <title>Interleukin-6 induces keratin expression in intestinal epithelial cells: potential role of keratin-8 in interleukin-6-induced barrier function alterations.</title>
        <authorList>
            <person name="Wang L."/>
            <person name="Srinivasan S."/>
            <person name="Theiss A.L."/>
            <person name="Merlin D."/>
            <person name="Sitaraman S.V."/>
        </authorList>
    </citation>
    <scope>FUNCTION</scope>
    <scope>TISSUE SPECIFICITY</scope>
    <scope>PHOSPHORYLATION</scope>
    <scope>INDUCTION</scope>
</reference>
<reference key="29">
    <citation type="journal article" date="2007" name="J. Proteome Res.">
        <title>Improved titanium dioxide enrichment of phosphopeptides from HeLa cells and high confident phosphopeptide identification by cross-validation of MS/MS and MS/MS/MS spectra.</title>
        <authorList>
            <person name="Yu L.R."/>
            <person name="Zhu Z."/>
            <person name="Chan K.C."/>
            <person name="Issaq H.J."/>
            <person name="Dimitrov D.S."/>
            <person name="Veenstra T.D."/>
        </authorList>
    </citation>
    <scope>PHOSPHORYLATION [LARGE SCALE ANALYSIS] AT SER-15</scope>
    <scope>IDENTIFICATION BY MASS SPECTROMETRY [LARGE SCALE ANALYSIS]</scope>
    <source>
        <tissue>Cervix carcinoma</tissue>
    </source>
</reference>
<reference key="30">
    <citation type="journal article" date="2008" name="Mol. Cell">
        <title>Kinase-selective enrichment enables quantitative phosphoproteomics of the kinome across the cell cycle.</title>
        <authorList>
            <person name="Daub H."/>
            <person name="Olsen J.V."/>
            <person name="Bairlein M."/>
            <person name="Gnad F."/>
            <person name="Oppermann F.S."/>
            <person name="Korner R."/>
            <person name="Greff Z."/>
            <person name="Keri G."/>
            <person name="Stemmann O."/>
            <person name="Mann M."/>
        </authorList>
    </citation>
    <scope>PHOSPHORYLATION [LARGE SCALE ANALYSIS] AT SER-60</scope>
    <scope>IDENTIFICATION BY MASS SPECTROMETRY [LARGE SCALE ANALYSIS]</scope>
    <source>
        <tissue>Cervix carcinoma</tissue>
    </source>
</reference>
<reference key="31">
    <citation type="journal article" date="2008" name="Proc. Natl. Acad. Sci. U.S.A.">
        <title>A quantitative atlas of mitotic phosphorylation.</title>
        <authorList>
            <person name="Dephoure N."/>
            <person name="Zhou C."/>
            <person name="Villen J."/>
            <person name="Beausoleil S.A."/>
            <person name="Bakalarski C.E."/>
            <person name="Elledge S.J."/>
            <person name="Gygi S.P."/>
        </authorList>
    </citation>
    <scope>PHOSPHORYLATION [LARGE SCALE ANALYSIS] AT SER-10; SER-34; SER-42; SER-60; THR-302 AND SER-399</scope>
    <scope>IDENTIFICATION BY MASS SPECTROMETRY [LARGE SCALE ANALYSIS]</scope>
    <source>
        <tissue>Cervix carcinoma</tissue>
    </source>
</reference>
<reference key="32">
    <citation type="journal article" date="2009" name="Science">
        <title>Lysine acetylation targets protein complexes and co-regulates major cellular functions.</title>
        <authorList>
            <person name="Choudhary C."/>
            <person name="Kumar C."/>
            <person name="Gnad F."/>
            <person name="Nielsen M.L."/>
            <person name="Rehman M."/>
            <person name="Walther T.C."/>
            <person name="Olsen J.V."/>
            <person name="Mann M."/>
        </authorList>
    </citation>
    <scope>ACETYLATION [LARGE SCALE ANALYSIS] AT LYS-131 AND LYS-426</scope>
    <scope>IDENTIFICATION BY MASS SPECTROMETRY [LARGE SCALE ANALYSIS]</scope>
</reference>
<reference key="33">
    <citation type="journal article" date="2010" name="J. Biol. Chem.">
        <title>O-GlcNAcylation determines the solubility, filament organization, and stability of keratins 8 and 18.</title>
        <authorList>
            <person name="Srikanth B."/>
            <person name="Vaidya M.M."/>
            <person name="Kalraiya R.D."/>
        </authorList>
    </citation>
    <scope>GLYCOSYLATION AT SER-30; SER-31 AND SER-49</scope>
</reference>
<reference key="34">
    <citation type="journal article" date="2010" name="Sci. Signal.">
        <title>Quantitative phosphoproteomics reveals widespread full phosphorylation site occupancy during mitosis.</title>
        <authorList>
            <person name="Olsen J.V."/>
            <person name="Vermeulen M."/>
            <person name="Santamaria A."/>
            <person name="Kumar C."/>
            <person name="Miller M.L."/>
            <person name="Jensen L.J."/>
            <person name="Gnad F."/>
            <person name="Cox J."/>
            <person name="Jensen T.S."/>
            <person name="Nigg E.A."/>
            <person name="Brunak S."/>
            <person name="Mann M."/>
        </authorList>
    </citation>
    <scope>PHOSPHORYLATION [LARGE SCALE ANALYSIS] AT SER-7; SER-15; SER-34; SER-42; SER-60; THR-65; SER-100; SER-319; SER-399 AND THR-404</scope>
    <scope>IDENTIFICATION BY MASS SPECTROMETRY [LARGE SCALE ANALYSIS]</scope>
    <source>
        <tissue>Cervix carcinoma</tissue>
    </source>
</reference>
<reference key="35">
    <citation type="journal article" date="2011" name="BMC Syst. Biol.">
        <title>Initial characterization of the human central proteome.</title>
        <authorList>
            <person name="Burkard T.R."/>
            <person name="Planyavsky M."/>
            <person name="Kaupe I."/>
            <person name="Breitwieser F.P."/>
            <person name="Buerckstuemmer T."/>
            <person name="Bennett K.L."/>
            <person name="Superti-Furga G."/>
            <person name="Colinge J."/>
        </authorList>
    </citation>
    <scope>IDENTIFICATION BY MASS SPECTROMETRY [LARGE SCALE ANALYSIS]</scope>
</reference>
<reference key="36">
    <citation type="journal article" date="2011" name="Sci. Signal.">
        <title>System-wide temporal characterization of the proteome and phosphoproteome of human embryonic stem cell differentiation.</title>
        <authorList>
            <person name="Rigbolt K.T."/>
            <person name="Prokhorova T.A."/>
            <person name="Akimov V."/>
            <person name="Henningsen J."/>
            <person name="Johansen P.T."/>
            <person name="Kratchmarova I."/>
            <person name="Kassem M."/>
            <person name="Mann M."/>
            <person name="Olsen J.V."/>
            <person name="Blagoev B."/>
        </authorList>
    </citation>
    <scope>IDENTIFICATION BY MASS SPECTROMETRY [LARGE SCALE ANALYSIS]</scope>
</reference>
<reference key="37">
    <citation type="journal article" date="2012" name="Mol. Cell. Proteomics">
        <title>Systematic analysis of protein pools, isoforms, and modifications affecting turnover and subcellular localization.</title>
        <authorList>
            <person name="Ahmad Y."/>
            <person name="Boisvert F.M."/>
            <person name="Lundberg E."/>
            <person name="Uhlen M."/>
            <person name="Lamond A.I."/>
        </authorList>
    </citation>
    <scope>SUBCELLULAR LOCATION [LARGE SCALE ANALYSIS]</scope>
</reference>
<reference key="38">
    <citation type="journal article" date="2012" name="Proc. Natl. Acad. Sci. U.S.A.">
        <title>N-terminal acetylome analyses and functional insights of the N-terminal acetyltransferase NatB.</title>
        <authorList>
            <person name="Van Damme P."/>
            <person name="Lasa M."/>
            <person name="Polevoda B."/>
            <person name="Gazquez C."/>
            <person name="Elosegui-Artola A."/>
            <person name="Kim D.S."/>
            <person name="De Juan-Pardo E."/>
            <person name="Demeyer K."/>
            <person name="Hole K."/>
            <person name="Larrea E."/>
            <person name="Timmerman E."/>
            <person name="Prieto J."/>
            <person name="Arnesen T."/>
            <person name="Sherman F."/>
            <person name="Gevaert K."/>
            <person name="Aldabe R."/>
        </authorList>
    </citation>
    <scope>IDENTIFICATION BY MASS SPECTROMETRY [LARGE SCALE ANALYSIS]</scope>
</reference>
<reference key="39">
    <citation type="journal article" date="2013" name="J. Cell Sci.">
        <title>A novel mechanism of keratin cytoskeleton organization through casein kinase Ialpha and FAM83H in colorectal cancer.</title>
        <authorList>
            <person name="Kuga T."/>
            <person name="Kume H."/>
            <person name="Kawasaki N."/>
            <person name="Sato M."/>
            <person name="Adachi J."/>
            <person name="Shiromizu T."/>
            <person name="Hoshino I."/>
            <person name="Nishimori T."/>
            <person name="Matsubara H."/>
            <person name="Tomonaga T."/>
        </authorList>
    </citation>
    <scope>INTERACTION WITH FAM83H</scope>
</reference>
<reference key="40">
    <citation type="journal article" date="2013" name="J. Proteome Res.">
        <title>Toward a comprehensive characterization of a human cancer cell phosphoproteome.</title>
        <authorList>
            <person name="Zhou H."/>
            <person name="Di Palma S."/>
            <person name="Preisinger C."/>
            <person name="Peng M."/>
            <person name="Polat A.N."/>
            <person name="Heck A.J."/>
            <person name="Mohammed S."/>
        </authorList>
    </citation>
    <scope>PHOSPHORYLATION [LARGE SCALE ANALYSIS] AT SER-10; SER-18; SER-34; SER-49; THR-52; SER-60; SER-93; SER-305; SER-319; SER-323 AND SER-399</scope>
    <scope>IDENTIFICATION BY MASS SPECTROMETRY [LARGE SCALE ANALYSIS]</scope>
    <source>
        <tissue>Cervix carcinoma</tissue>
        <tissue>Erythroleukemia</tissue>
    </source>
</reference>
<reference key="41">
    <citation type="journal article" date="2014" name="J. Invest. Dermatol.">
        <title>Interaction of plectin with keratins 5 and 14: dependence on several plectin domains and keratin quaternary structure.</title>
        <authorList>
            <person name="Bouameur J.E."/>
            <person name="Favre B."/>
            <person name="Fontao L."/>
            <person name="Lingasamy P."/>
            <person name="Begre N."/>
            <person name="Borradori L."/>
        </authorList>
    </citation>
    <scope>IDENTIFICATION IN A COMPLEX WITH KRT8</scope>
    <scope>INTERACTION WITH KRT8 AND PLEC</scope>
</reference>
<reference key="42">
    <citation type="journal article" date="2014" name="J. Proteomics">
        <title>An enzyme assisted RP-RPLC approach for in-depth analysis of human liver phosphoproteome.</title>
        <authorList>
            <person name="Bian Y."/>
            <person name="Song C."/>
            <person name="Cheng K."/>
            <person name="Dong M."/>
            <person name="Wang F."/>
            <person name="Huang J."/>
            <person name="Sun D."/>
            <person name="Wang L."/>
            <person name="Ye M."/>
            <person name="Zou H."/>
        </authorList>
    </citation>
    <scope>PHOSPHORYLATION [LARGE SCALE ANALYSIS] AT THR-65; SER-177; SER-305; SER-398; SER-399; SER-401 AND THR-404</scope>
    <scope>IDENTIFICATION BY MASS SPECTROMETRY [LARGE SCALE ANALYSIS]</scope>
    <source>
        <tissue>Liver</tissue>
    </source>
</reference>
<reference key="43">
    <citation type="journal article" date="2014" name="Mol. Cell. Proteomics">
        <title>Immunoaffinity enrichment and mass spectrometry analysis of protein methylation.</title>
        <authorList>
            <person name="Guo A."/>
            <person name="Gu H."/>
            <person name="Zhou J."/>
            <person name="Mulhern D."/>
            <person name="Wang Y."/>
            <person name="Lee K.A."/>
            <person name="Yang V."/>
            <person name="Aguiar M."/>
            <person name="Kornhauser J."/>
            <person name="Jia X."/>
            <person name="Ren J."/>
            <person name="Beausoleil S.A."/>
            <person name="Silva J.C."/>
            <person name="Vemulapalli V."/>
            <person name="Bedford M.T."/>
            <person name="Comb M.J."/>
        </authorList>
    </citation>
    <scope>METHYLATION [LARGE SCALE ANALYSIS] AT ARG-45 AND ARG-55</scope>
    <scope>IDENTIFICATION BY MASS SPECTROMETRY [LARGE SCALE ANALYSIS]</scope>
    <source>
        <tissue>Colon carcinoma</tissue>
    </source>
</reference>
<reference key="44">
    <citation type="journal article" date="2014" name="Proc. Natl. Acad. Sci. U.S.A.">
        <title>Mapping of SUMO sites and analysis of SUMOylation changes induced by external stimuli.</title>
        <authorList>
            <person name="Impens F."/>
            <person name="Radoshevich L."/>
            <person name="Cossart P."/>
            <person name="Ribet D."/>
        </authorList>
    </citation>
    <scope>SUMOYLATION [LARGE SCALE ANALYSIS] AT LYS-426</scope>
    <scope>IDENTIFICATION BY MASS SPECTROMETRY [LARGE SCALE ANALYSIS]</scope>
</reference>
<reference key="45">
    <citation type="journal article" date="2017" name="Nat. Struct. Mol. Biol.">
        <title>Site-specific mapping of the human SUMO proteome reveals co-modification with phosphorylation.</title>
        <authorList>
            <person name="Hendriks I.A."/>
            <person name="Lyon D."/>
            <person name="Young C."/>
            <person name="Jensen L.J."/>
            <person name="Vertegaal A.C."/>
            <person name="Nielsen M.L."/>
        </authorList>
    </citation>
    <scope>SUMOYLATION [LARGE SCALE ANALYSIS] AT LYS-81; LYS-247; LYS-370; LYS-372; LYS-417 AND LYS-426</scope>
    <scope>IDENTIFICATION BY MASS SPECTROMETRY [LARGE SCALE ANALYSIS]</scope>
</reference>
<reference key="46">
    <citation type="journal article" date="1997" name="J. Clin. Invest.">
        <title>Mutation of human keratin 18 in association with cryptogenic cirrhosis.</title>
        <authorList>
            <person name="Ku N.-O."/>
            <person name="Wright T.L."/>
            <person name="Terrault N.A."/>
            <person name="Gish R."/>
            <person name="Omary M.B."/>
        </authorList>
    </citation>
    <scope>VARIANT CIRRH LEU-128</scope>
</reference>
<reference key="47">
    <citation type="journal article" date="2003" name="Proc. Natl. Acad. Sci. U.S.A.">
        <title>Keratin 8 and 18 mutations are risk factors for developing liver disease of multiple etiologies.</title>
        <authorList>
            <person name="Ku N.-O."/>
            <person name="Darling J.M."/>
            <person name="Krams S.M."/>
            <person name="Esquivel C.O."/>
            <person name="Keeffe E.B."/>
            <person name="Sibley R.K."/>
            <person name="Lee Y.M."/>
            <person name="Wright T.L."/>
            <person name="Omary M.B."/>
        </authorList>
    </citation>
    <scope>VARIANTS CIRRH ALA-103; LEU-128; GLN-261 AND ARG-340</scope>
    <scope>VARIANT THR-230</scope>
</reference>
<comment type="function">
    <text evidence="1 11 14 15 23 25 28 29">Involved in the uptake of thrombin-antithrombin complexes by hepatic cells (By similarity). When phosphorylated, plays a role in filament reorganization. Involved in the delivery of mutated CFTR to the plasma membrane. Together with KRT8, is involved in interleukin-6 (IL-6)-mediated barrier protection.</text>
</comment>
<comment type="subunit">
    <text evidence="1 2 5 6 7 8 11 12 18 22 26 29">Heterotetramer of two type I and two type II keratins. KRT18 associates with KRT8 (PubMed:10852826, PubMed:24940650). Interacts with PLEC isoform 1C, when in a heterodimer with KRT8 (PubMed:24940650). Interacts with the thrombin-antithrombin complex (By similarity). Interacts with PNN and mutated CFTR. Interacts with YWHAE, YWHAH and YWHAZ only when phosphorylated. Interacts with DNAJB6, TCHP and TRADD. Interacts with FAM83H (PubMed:23902688). Interacts with EPPK1 (By similarity). Interacts with PKP1 and PKP2 (PubMed:10852826).</text>
</comment>
<comment type="subunit">
    <text evidence="13">(Microbial infection) Interacts with hepatitis C virus/HCV core protein.</text>
</comment>
<comment type="interaction">
    <interactant intactId="EBI-297888">
        <id>P05783</id>
    </interactant>
    <interactant intactId="EBI-8643161">
        <id>Q9NX04</id>
        <label>AIRIM</label>
    </interactant>
    <organismsDiffer>false</organismsDiffer>
    <experiments>3</experiments>
</comment>
<comment type="interaction">
    <interactant intactId="EBI-297888">
        <id>P05783</id>
    </interactant>
    <interactant intactId="EBI-949378">
        <id>Q14457</id>
        <label>BECN1</label>
    </interactant>
    <organismsDiffer>false</organismsDiffer>
    <experiments>2</experiments>
</comment>
<comment type="interaction">
    <interactant intactId="EBI-297888">
        <id>P05783</id>
    </interactant>
    <interactant intactId="EBI-10247802">
        <id>Q8IYE0-2</id>
        <label>CCDC146</label>
    </interactant>
    <organismsDiffer>false</organismsDiffer>
    <experiments>3</experiments>
</comment>
<comment type="interaction">
    <interactant intactId="EBI-297888">
        <id>P05783</id>
    </interactant>
    <interactant intactId="EBI-10175300">
        <id>Q8TD31-3</id>
        <label>CCHCR1</label>
    </interactant>
    <organismsDiffer>false</organismsDiffer>
    <experiments>3</experiments>
</comment>
<comment type="interaction">
    <interactant intactId="EBI-297888">
        <id>P05783</id>
    </interactant>
    <interactant intactId="EBI-1053164">
        <id>O75190</id>
        <label>DNAJB6</label>
    </interactant>
    <organismsDiffer>false</organismsDiffer>
    <experiments>6</experiments>
</comment>
<comment type="interaction">
    <interactant intactId="EBI-297888">
        <id>P05783</id>
    </interactant>
    <interactant intactId="EBI-743105">
        <id>Q5JVL4</id>
        <label>EFHC1</label>
    </interactant>
    <organismsDiffer>false</organismsDiffer>
    <experiments>3</experiments>
</comment>
<comment type="interaction">
    <interactant intactId="EBI-297888">
        <id>P05783</id>
    </interactant>
    <interactant intactId="EBI-618309">
        <id>Q08379</id>
        <label>GOLGA2</label>
    </interactant>
    <organismsDiffer>false</organismsDiffer>
    <experiments>7</experiments>
</comment>
<comment type="interaction">
    <interactant intactId="EBI-297888">
        <id>P05783</id>
    </interactant>
    <interactant intactId="EBI-2514791">
        <id>Q96CS2</id>
        <label>HAUS1</label>
    </interactant>
    <organismsDiffer>false</organismsDiffer>
    <experiments>3</experiments>
</comment>
<comment type="interaction">
    <interactant intactId="EBI-297888">
        <id>P05783</id>
    </interactant>
    <interactant intactId="EBI-16429135">
        <id>A0A0S2Z4Q4</id>
        <label>HGS</label>
    </interactant>
    <organismsDiffer>false</organismsDiffer>
    <experiments>3</experiments>
</comment>
<comment type="interaction">
    <interactant intactId="EBI-297888">
        <id>P05783</id>
    </interactant>
    <interactant intactId="EBI-740220">
        <id>O14964</id>
        <label>HGS</label>
    </interactant>
    <organismsDiffer>false</organismsDiffer>
    <experiments>7</experiments>
</comment>
<comment type="interaction">
    <interactant intactId="EBI-297888">
        <id>P05783</id>
    </interactant>
    <interactant intactId="EBI-466029">
        <id>P42858</id>
        <label>HTT</label>
    </interactant>
    <organismsDiffer>false</organismsDiffer>
    <experiments>6</experiments>
</comment>
<comment type="interaction">
    <interactant intactId="EBI-297888">
        <id>P05783</id>
    </interactant>
    <interactant intactId="EBI-81279">
        <id>Q9Y6K9</id>
        <label>IKBKG</label>
    </interactant>
    <organismsDiffer>false</organismsDiffer>
    <experiments>3</experiments>
</comment>
<comment type="interaction">
    <interactant intactId="EBI-297888">
        <id>P05783</id>
    </interactant>
    <interactant intactId="EBI-14069005">
        <id>Q9BVG8-5</id>
        <label>KIFC3</label>
    </interactant>
    <organismsDiffer>false</organismsDiffer>
    <experiments>3</experiments>
</comment>
<comment type="interaction">
    <interactant intactId="EBI-297888">
        <id>P05783</id>
    </interactant>
    <interactant intactId="EBI-702198">
        <id>P02538</id>
        <label>KRT6A</label>
    </interactant>
    <organismsDiffer>false</organismsDiffer>
    <experiments>3</experiments>
</comment>
<comment type="interaction">
    <interactant intactId="EBI-297888">
        <id>P05783</id>
    </interactant>
    <interactant intactId="EBI-2564105">
        <id>P48668</id>
        <label>KRT6C</label>
    </interactant>
    <organismsDiffer>false</organismsDiffer>
    <experiments>4</experiments>
</comment>
<comment type="interaction">
    <interactant intactId="EBI-297888">
        <id>P05783</id>
    </interactant>
    <interactant intactId="EBI-2952676">
        <id>Q3SY84</id>
        <label>KRT71</label>
    </interactant>
    <organismsDiffer>false</organismsDiffer>
    <experiments>3</experiments>
</comment>
<comment type="interaction">
    <interactant intactId="EBI-297888">
        <id>P05783</id>
    </interactant>
    <interactant intactId="EBI-2514135">
        <id>Q5XKE5</id>
        <label>KRT79</label>
    </interactant>
    <organismsDiffer>false</organismsDiffer>
    <experiments>3</experiments>
</comment>
<comment type="interaction">
    <interactant intactId="EBI-297888">
        <id>P05783</id>
    </interactant>
    <interactant intactId="EBI-297852">
        <id>P05787</id>
        <label>KRT8</label>
    </interactant>
    <organismsDiffer>false</organismsDiffer>
    <experiments>16</experiments>
</comment>
<comment type="interaction">
    <interactant intactId="EBI-297888">
        <id>P05783</id>
    </interactant>
    <interactant intactId="EBI-739648">
        <id>Q14533</id>
        <label>KRT81</label>
    </interactant>
    <organismsDiffer>false</organismsDiffer>
    <experiments>3</experiments>
</comment>
<comment type="interaction">
    <interactant intactId="EBI-297888">
        <id>P05783</id>
    </interactant>
    <interactant intactId="EBI-2830524">
        <id>O75022</id>
        <label>LILRB3</label>
    </interactant>
    <organismsDiffer>false</organismsDiffer>
    <experiments>3</experiments>
</comment>
<comment type="interaction">
    <interactant intactId="EBI-297888">
        <id>P05783</id>
    </interactant>
    <interactant intactId="EBI-5324932">
        <id>Q9BQ69</id>
        <label>MACROD1</label>
    </interactant>
    <organismsDiffer>false</organismsDiffer>
    <experiments>7</experiments>
</comment>
<comment type="interaction">
    <interactant intactId="EBI-297888">
        <id>P05783</id>
    </interactant>
    <interactant intactId="EBI-475646">
        <id>P07196</id>
        <label>NEFL</label>
    </interactant>
    <organismsDiffer>false</organismsDiffer>
    <experiments>3</experiments>
</comment>
<comment type="interaction">
    <interactant intactId="EBI-297888">
        <id>P05783</id>
    </interactant>
    <interactant intactId="EBI-744782">
        <id>Q9Y5B8</id>
        <label>NME7</label>
    </interactant>
    <organismsDiffer>false</organismsDiffer>
    <experiments>4</experiments>
</comment>
<comment type="interaction">
    <interactant intactId="EBI-297888">
        <id>P05783</id>
    </interactant>
    <interactant intactId="EBI-9087684">
        <id>Q13835-2</id>
        <label>PKP1</label>
    </interactant>
    <organismsDiffer>false</organismsDiffer>
    <experiments>4</experiments>
</comment>
<comment type="interaction">
    <interactant intactId="EBI-297888">
        <id>P05783</id>
    </interactant>
    <interactant intactId="EBI-16437709">
        <id>A0A0S2Z505</id>
        <label>PSTPIP2</label>
    </interactant>
    <organismsDiffer>false</organismsDiffer>
    <experiments>3</experiments>
</comment>
<comment type="interaction">
    <interactant intactId="EBI-297888">
        <id>P05783</id>
    </interactant>
    <interactant intactId="EBI-1504830">
        <id>Q9P2K3-2</id>
        <label>RCOR3</label>
    </interactant>
    <organismsDiffer>false</organismsDiffer>
    <experiments>3</experiments>
</comment>
<comment type="interaction">
    <interactant intactId="EBI-297888">
        <id>P05783</id>
    </interactant>
    <interactant intactId="EBI-6872807">
        <id>Q8N0S2</id>
        <label>SYCE1</label>
    </interactant>
    <organismsDiffer>false</organismsDiffer>
    <experiments>3</experiments>
</comment>
<comment type="interaction">
    <interactant intactId="EBI-297888">
        <id>P05783</id>
    </interactant>
    <interactant intactId="EBI-750487">
        <id>Q8WW24</id>
        <label>TEKT4</label>
    </interactant>
    <organismsDiffer>false</organismsDiffer>
    <experiments>3</experiments>
</comment>
<comment type="interaction">
    <interactant intactId="EBI-297888">
        <id>P05783</id>
    </interactant>
    <interactant intactId="EBI-359215">
        <id>Q15628</id>
        <label>TRADD</label>
    </interactant>
    <organismsDiffer>false</organismsDiffer>
    <experiments>11</experiments>
</comment>
<comment type="interaction">
    <interactant intactId="EBI-297888">
        <id>P05783</id>
    </interactant>
    <interactant intactId="EBI-346882">
        <id>Q99816</id>
        <label>TSG101</label>
    </interactant>
    <organismsDiffer>false</organismsDiffer>
    <experiments>4</experiments>
</comment>
<comment type="interaction">
    <interactant intactId="EBI-297888">
        <id>P05783</id>
    </interactant>
    <interactant intactId="EBI-359832">
        <id>P61981</id>
        <label>YWHAG</label>
    </interactant>
    <organismsDiffer>false</organismsDiffer>
    <experiments>3</experiments>
</comment>
<comment type="interaction">
    <interactant intactId="EBI-297888">
        <id>P05783</id>
    </interactant>
    <interactant intactId="EBI-2504426">
        <id>B7UM99</id>
        <label>tir</label>
    </interactant>
    <organismsDiffer>true</organismsDiffer>
    <experiments>5</experiments>
</comment>
<comment type="subcellular location">
    <subcellularLocation>
        <location evidence="3">Nucleus matrix</location>
    </subcellularLocation>
    <subcellularLocation>
        <location>Cytoplasm</location>
        <location>Perinuclear region</location>
    </subcellularLocation>
    <subcellularLocation>
        <location evidence="17">Nucleus</location>
        <location evidence="17">Nucleolus</location>
    </subcellularLocation>
    <subcellularLocation>
        <location evidence="3">Cytoplasm</location>
    </subcellularLocation>
</comment>
<comment type="tissue specificity">
    <text evidence="15 19 20 21">Expressed in colon, placenta, liver and very weakly in exocervix. Increased expression observed in lymph nodes of breast carcinoma.</text>
</comment>
<comment type="induction">
    <text evidence="15">By IL6/interleukin-6.</text>
</comment>
<comment type="PTM">
    <text evidence="10 14 15 23 26 29">Phosphorylation at Ser-34 increases during mitosis. Hyperphosphorylated at Ser-53 in diseased cirrhosis liver. Phosphorylation increases by IL-6.</text>
</comment>
<comment type="PTM">
    <text evidence="28">Proteolytically cleaved by caspases during epithelial cell apoptosis. Cleavage occurs at Asp-238 by either caspase-3, caspase-6 or caspase-7.</text>
</comment>
<comment type="PTM">
    <text>O-GlcNAcylation increases solubility, and decreases stability by inducing proteasomal degradation.</text>
</comment>
<comment type="disease" evidence="9 27">
    <disease id="DI-01454">
        <name>Cirrhosis</name>
        <acronym>CIRRH</acronym>
        <description>A liver disease characterized by severe panlobular liver-cell swelling with Mallory body formation, prominent pericellular fibrosis, and marked deposits of copper. Clinical features include abdomen swelling, jaundice and pulmonary hypertension.</description>
        <dbReference type="MIM" id="215600"/>
    </disease>
    <text>The disease is caused by variants affecting the gene represented in this entry.</text>
</comment>
<comment type="miscellaneous">
    <text>There are two types of cytoskeletal and microfibrillar keratin: I (acidic; 40-55 kDa) and II (neutral to basic; 56-70 kDa).</text>
</comment>
<comment type="similarity">
    <text evidence="4">Belongs to the intermediate filament family.</text>
</comment>
<evidence type="ECO:0000250" key="1"/>
<evidence type="ECO:0000250" key="2">
    <source>
        <dbReference type="UniProtKB" id="P05784"/>
    </source>
</evidence>
<evidence type="ECO:0000250" key="3">
    <source>
        <dbReference type="UniProtKB" id="Q5BJY9"/>
    </source>
</evidence>
<evidence type="ECO:0000255" key="4">
    <source>
        <dbReference type="PROSITE-ProRule" id="PRU01188"/>
    </source>
</evidence>
<evidence type="ECO:0000269" key="5">
    <source>
    </source>
</evidence>
<evidence type="ECO:0000269" key="6">
    <source>
    </source>
</evidence>
<evidence type="ECO:0000269" key="7">
    <source>
    </source>
</evidence>
<evidence type="ECO:0000269" key="8">
    <source>
    </source>
</evidence>
<evidence type="ECO:0000269" key="9">
    <source>
    </source>
</evidence>
<evidence type="ECO:0000269" key="10">
    <source>
    </source>
</evidence>
<evidence type="ECO:0000269" key="11">
    <source>
    </source>
</evidence>
<evidence type="ECO:0000269" key="12">
    <source>
    </source>
</evidence>
<evidence type="ECO:0000269" key="13">
    <source>
    </source>
</evidence>
<evidence type="ECO:0000269" key="14">
    <source>
    </source>
</evidence>
<evidence type="ECO:0000269" key="15">
    <source>
    </source>
</evidence>
<evidence type="ECO:0000269" key="16">
    <source>
    </source>
</evidence>
<evidence type="ECO:0000269" key="17">
    <source>
    </source>
</evidence>
<evidence type="ECO:0000269" key="18">
    <source>
    </source>
</evidence>
<evidence type="ECO:0000269" key="19">
    <source>
    </source>
</evidence>
<evidence type="ECO:0000269" key="20">
    <source>
    </source>
</evidence>
<evidence type="ECO:0000269" key="21">
    <source>
    </source>
</evidence>
<evidence type="ECO:0000269" key="22">
    <source>
    </source>
</evidence>
<evidence type="ECO:0000269" key="23">
    <source>
    </source>
</evidence>
<evidence type="ECO:0000269" key="24">
    <source>
    </source>
</evidence>
<evidence type="ECO:0000269" key="25">
    <source>
    </source>
</evidence>
<evidence type="ECO:0000269" key="26">
    <source>
    </source>
</evidence>
<evidence type="ECO:0000269" key="27">
    <source>
    </source>
</evidence>
<evidence type="ECO:0000269" key="28">
    <source>
    </source>
</evidence>
<evidence type="ECO:0000269" key="29">
    <source>
    </source>
</evidence>
<evidence type="ECO:0000305" key="30"/>
<evidence type="ECO:0007744" key="31">
    <source>
    </source>
</evidence>
<evidence type="ECO:0007744" key="32">
    <source>
    </source>
</evidence>
<evidence type="ECO:0007744" key="33">
    <source>
    </source>
</evidence>
<evidence type="ECO:0007744" key="34">
    <source>
    </source>
</evidence>
<evidence type="ECO:0007744" key="35">
    <source>
    </source>
</evidence>
<evidence type="ECO:0007744" key="36">
    <source>
    </source>
</evidence>
<evidence type="ECO:0007744" key="37">
    <source>
    </source>
</evidence>
<evidence type="ECO:0007744" key="38">
    <source>
    </source>
</evidence>
<evidence type="ECO:0007744" key="39">
    <source>
    </source>
</evidence>
<evidence type="ECO:0007744" key="40">
    <source>
    </source>
</evidence>
<sequence length="430" mass="48058">MSFTTRSTFSTNYRSLGSVQAPSYGARPVSSAASVYAGAGGSGSRISVSRSTSFRGGMGSGGLATGIAGGLAGMGGIQNEKETMQSLNDRLASYLDRVRSLETENRRLESKIREHLEKKGPQVRDWSHYFKIIEDLRAQIFANTVDNARIVLQIDNARLAADDFRVKYETELAMRQSVENDIHGLRKVIDDTNITRLQLETEIEALKEELLFMKKNHEEEVKGLQAQIASSGLTVEVDAPKSQDLAKIMADIRAQYDELARKNREELDKYWSQQIEESTTVVTTQSAEVGAAETTLTELRRTVQSLEIDLDSMRNLKASLENSLREVEARYALQMEQLNGILLHLESELAQTRAEGQRQAQEYEALLNIKVKLEAEIATYRRLLEDGEDFNLGDALDSSNSMQTIQKTTTRRIVDGKVVSETNDTKVLRH</sequence>
<proteinExistence type="evidence at protein level"/>
<keyword id="KW-0007">Acetylation</keyword>
<keyword id="KW-0131">Cell cycle</keyword>
<keyword id="KW-0175">Coiled coil</keyword>
<keyword id="KW-0963">Cytoplasm</keyword>
<keyword id="KW-0903">Direct protein sequencing</keyword>
<keyword id="KW-0225">Disease variant</keyword>
<keyword id="KW-0325">Glycoprotein</keyword>
<keyword id="KW-0945">Host-virus interaction</keyword>
<keyword id="KW-0403">Intermediate filament</keyword>
<keyword id="KW-1017">Isopeptide bond</keyword>
<keyword id="KW-0416">Keratin</keyword>
<keyword id="KW-0488">Methylation</keyword>
<keyword id="KW-0539">Nucleus</keyword>
<keyword id="KW-0597">Phosphoprotein</keyword>
<keyword id="KW-1267">Proteomics identification</keyword>
<keyword id="KW-1185">Reference proteome</keyword>
<keyword id="KW-0832">Ubl conjugation</keyword>
<feature type="initiator methionine" description="Removed" evidence="24">
    <location>
        <position position="1"/>
    </location>
</feature>
<feature type="chain" id="PRO_0000063666" description="Keratin, type I cytoskeletal 18">
    <location>
        <begin position="2"/>
        <end position="430"/>
    </location>
</feature>
<feature type="domain" description="IF rod" evidence="4">
    <location>
        <begin position="80"/>
        <end position="391"/>
    </location>
</feature>
<feature type="region of interest" description="Head">
    <location>
        <begin position="2"/>
        <end position="79"/>
    </location>
</feature>
<feature type="region of interest" description="Necessary for interaction with PNN" evidence="5">
    <location>
        <begin position="70"/>
        <end position="373"/>
    </location>
</feature>
<feature type="region of interest" description="Interaction with TRADD" evidence="8">
    <location>
        <begin position="77"/>
        <end position="128"/>
    </location>
</feature>
<feature type="region of interest" description="Coil 1A">
    <location>
        <begin position="80"/>
        <end position="115"/>
    </location>
</feature>
<feature type="region of interest" description="Linker 1">
    <location>
        <begin position="116"/>
        <end position="132"/>
    </location>
</feature>
<feature type="region of interest" description="Coil 1B">
    <location>
        <begin position="133"/>
        <end position="224"/>
    </location>
</feature>
<feature type="region of interest" description="Linker 12">
    <location>
        <begin position="225"/>
        <end position="248"/>
    </location>
</feature>
<feature type="region of interest" description="Interaction with DNAJB6" evidence="7">
    <location>
        <begin position="243"/>
        <end position="391"/>
    </location>
</feature>
<feature type="region of interest" description="Coil 2">
    <location>
        <begin position="249"/>
        <end position="387"/>
    </location>
</feature>
<feature type="region of interest" description="Tail">
    <location>
        <begin position="388"/>
        <end position="430"/>
    </location>
</feature>
<feature type="site" description="Cleavage; by caspase-3, caspase-6 or caspase-7">
    <location>
        <begin position="238"/>
        <end position="239"/>
    </location>
</feature>
<feature type="site" description="Stutter">
    <location>
        <position position="271"/>
    </location>
</feature>
<feature type="site" description="Stutter">
    <location>
        <position position="331"/>
    </location>
</feature>
<feature type="modified residue" description="N-acetylserine" evidence="24">
    <location>
        <position position="2"/>
    </location>
</feature>
<feature type="modified residue" description="Phosphoserine" evidence="35">
    <location>
        <position position="7"/>
    </location>
</feature>
<feature type="modified residue" description="Phosphoserine" evidence="32 36">
    <location>
        <position position="10"/>
    </location>
</feature>
<feature type="modified residue" description="Phosphoserine" evidence="31 35">
    <location>
        <position position="15"/>
    </location>
</feature>
<feature type="modified residue" description="Phosphoserine" evidence="36">
    <location>
        <position position="18"/>
    </location>
</feature>
<feature type="modified residue" description="Phosphoserine; alternate" evidence="2">
    <location>
        <position position="30"/>
    </location>
</feature>
<feature type="modified residue" description="Phosphoserine; alternate" evidence="2">
    <location>
        <position position="31"/>
    </location>
</feature>
<feature type="modified residue" description="Phosphoserine; by CDK1" evidence="10 29 32 35 36">
    <location>
        <position position="34"/>
    </location>
</feature>
<feature type="modified residue" description="Phosphotyrosine" evidence="2">
    <location>
        <position position="36"/>
    </location>
</feature>
<feature type="modified residue" description="Phosphoserine" evidence="32 35">
    <location>
        <position position="42"/>
    </location>
</feature>
<feature type="modified residue" description="Omega-N-methylarginine" evidence="37">
    <location>
        <position position="45"/>
    </location>
</feature>
<feature type="modified residue" description="Phosphoserine; alternate" evidence="36">
    <location>
        <position position="49"/>
    </location>
</feature>
<feature type="modified residue" description="Phosphoserine; by MAPKAPK2 and MAPKAPK3" evidence="2">
    <location>
        <position position="51"/>
    </location>
</feature>
<feature type="modified residue" description="Phosphothreonine" evidence="36">
    <location>
        <position position="52"/>
    </location>
</feature>
<feature type="modified residue" description="Phosphoserine; by CAMK, PKC/PRKCE and AURKA" evidence="10 14 23">
    <location>
        <position position="53"/>
    </location>
</feature>
<feature type="modified residue" description="Omega-N-methylarginine" evidence="37">
    <location>
        <position position="55"/>
    </location>
</feature>
<feature type="modified residue" description="Phosphoserine" evidence="32 33 35 36">
    <location>
        <position position="60"/>
    </location>
</feature>
<feature type="modified residue" description="Phosphothreonine" evidence="35 38">
    <location>
        <position position="65"/>
    </location>
</feature>
<feature type="modified residue" description="Phosphoserine" evidence="36">
    <location>
        <position position="93"/>
    </location>
</feature>
<feature type="modified residue" description="Phosphoserine" evidence="35">
    <location>
        <position position="100"/>
    </location>
</feature>
<feature type="modified residue" description="N6-acetyllysine" evidence="34">
    <location>
        <position position="131"/>
    </location>
</feature>
<feature type="modified residue" description="Phosphoserine" evidence="38">
    <location>
        <position position="177"/>
    </location>
</feature>
<feature type="modified residue" description="Phosphothreonine" evidence="32">
    <location>
        <position position="302"/>
    </location>
</feature>
<feature type="modified residue" description="Phosphoserine" evidence="36 38">
    <location>
        <position position="305"/>
    </location>
</feature>
<feature type="modified residue" description="Phosphoserine" evidence="35 36">
    <location>
        <position position="319"/>
    </location>
</feature>
<feature type="modified residue" description="Phosphoserine" evidence="36">
    <location>
        <position position="323"/>
    </location>
</feature>
<feature type="modified residue" description="Phosphoserine" evidence="38">
    <location>
        <position position="398"/>
    </location>
</feature>
<feature type="modified residue" description="Phosphoserine" evidence="32 35 36 38">
    <location>
        <position position="399"/>
    </location>
</feature>
<feature type="modified residue" description="Phosphoserine" evidence="38">
    <location>
        <position position="401"/>
    </location>
</feature>
<feature type="modified residue" description="Phosphothreonine" evidence="35 38">
    <location>
        <position position="404"/>
    </location>
</feature>
<feature type="modified residue" description="N6-acetyllysine; alternate" evidence="34">
    <location>
        <position position="426"/>
    </location>
</feature>
<feature type="glycosylation site" id="CAR_000175" description="O-linked (GlcNAc) serine; alternate" evidence="16 24">
    <location>
        <position position="30"/>
    </location>
</feature>
<feature type="glycosylation site" id="CAR_000193" description="O-linked (GlcNAc) serine; alternate" evidence="16 24">
    <location>
        <position position="31"/>
    </location>
</feature>
<feature type="glycosylation site" id="CAR_000194" description="O-linked (GlcNAc) serine; alternate" evidence="16 24">
    <location>
        <position position="49"/>
    </location>
</feature>
<feature type="cross-link" description="Glycyl lysine isopeptide (Lys-Gly) (interchain with G-Cter in SUMO2)" evidence="40">
    <location>
        <position position="81"/>
    </location>
</feature>
<feature type="cross-link" description="Glycyl lysine isopeptide (Lys-Gly) (interchain with G-Cter in SUMO2)" evidence="40">
    <location>
        <position position="247"/>
    </location>
</feature>
<feature type="cross-link" description="Glycyl lysine isopeptide (Lys-Gly) (interchain with G-Cter in SUMO2)" evidence="40">
    <location>
        <position position="370"/>
    </location>
</feature>
<feature type="cross-link" description="Glycyl lysine isopeptide (Lys-Gly) (interchain with G-Cter in SUMO2)" evidence="40">
    <location>
        <position position="372"/>
    </location>
</feature>
<feature type="cross-link" description="Glycyl lysine isopeptide (Lys-Gly) (interchain with G-Cter in SUMO2)" evidence="40">
    <location>
        <position position="417"/>
    </location>
</feature>
<feature type="cross-link" description="Glycyl lysine isopeptide (Lys-Gly) (interchain with G-Cter in SUMO1); alternate" evidence="39">
    <location>
        <position position="426"/>
    </location>
</feature>
<feature type="cross-link" description="Glycyl lysine isopeptide (Lys-Gly) (interchain with G-Cter in SUMO2); alternate" evidence="40">
    <location>
        <position position="426"/>
    </location>
</feature>
<feature type="sequence variant" id="VAR_023054" description="In CIRRH; dbSNP:rs61136606." evidence="9">
    <original>T</original>
    <variation>A</variation>
    <location>
        <position position="103"/>
    </location>
</feature>
<feature type="sequence variant" id="VAR_003852" description="In CIRRH; interferes with the ability to form normal filaments; dbSNP:rs57758506." evidence="9 27">
    <original>H</original>
    <variation>L</variation>
    <location>
        <position position="128"/>
    </location>
</feature>
<feature type="sequence variant" id="VAR_023055" description="In dbSNP:rs58472472." evidence="9">
    <original>S</original>
    <variation>T</variation>
    <location>
        <position position="230"/>
    </location>
</feature>
<feature type="sequence variant" id="VAR_023056" description="In CIRRH; dbSNP:rs57354642." evidence="9">
    <original>R</original>
    <variation>Q</variation>
    <location>
        <position position="261"/>
    </location>
</feature>
<feature type="sequence variant" id="VAR_023057" description="In CIRRH; dbSNP:rs57370769." evidence="9">
    <original>G</original>
    <variation>R</variation>
    <location>
        <position position="340"/>
    </location>
</feature>
<feature type="mutagenesis site" description="No effect on phosphorylation; when associated with A-7 and A-10." evidence="23">
    <original>S</original>
    <variation>A</variation>
    <location>
        <position position="2"/>
    </location>
</feature>
<feature type="mutagenesis site" description="No effect on phosphorylation; when associated with A-2 and A-10." evidence="23">
    <original>S</original>
    <variation>A</variation>
    <location>
        <position position="7"/>
    </location>
</feature>
<feature type="mutagenesis site" description="No effect on phosphorylation; when associated with A-2 and A-7." evidence="23">
    <original>S</original>
    <variation>A</variation>
    <location>
        <position position="10"/>
    </location>
</feature>
<feature type="mutagenesis site" description="No effect on phosphorylation; when associated with A-18 and A-23. Abolishes phosphorylation; when associated with A-18; A-34; A-47; A-49; A-51 and A-53." evidence="23">
    <original>S</original>
    <variation>A</variation>
    <location>
        <position position="15"/>
    </location>
</feature>
<feature type="mutagenesis site" description="No effect on phosphorylation; when associated with A-15 and A-23. Abolishes phosphorylation; when associated with A-15; A-34; A-47; A-49; A-51 and A-53." evidence="23">
    <original>S</original>
    <variation>A</variation>
    <location>
        <position position="18"/>
    </location>
</feature>
<feature type="mutagenesis site" description="No effect on phosphorylation; when associated with A-15 and A-18." evidence="23">
    <original>S</original>
    <variation>A</variation>
    <location>
        <position position="23"/>
    </location>
</feature>
<feature type="mutagenesis site" description="No effect on phosphorylation; when associated with A-31 and A-34, or with A-31; A-44 and A-51. Abolishes glycosylation but does not affect binding to YWHAE and YWHAZ; when associated with A-31 and A-49." evidence="23 24">
    <original>S</original>
    <variation>A</variation>
    <location>
        <position position="30"/>
    </location>
</feature>
<feature type="mutagenesis site" description="No effect on phosphorylation; when associated with A-30 and A-34, or with A-30; A-44 and A-51. Abolishes glycosylation but does not affect binding to YWHAE and YWHAZ; when associated with A-30 and A-49." evidence="23 24">
    <original>S</original>
    <variation>A</variation>
    <location>
        <position position="31"/>
    </location>
</feature>
<feature type="mutagenesis site" description="No effect on phosphorylation; when associated with A-30 and A-31. Abolishes phosphorylation; when associated with A-15; A-18; A-47; A-49; A-51 and A-53. Abolishes binding to YWHAE and YWHAZ; and when associated with A-53." evidence="23 29">
    <original>S</original>
    <variation>A</variation>
    <location>
        <position position="34"/>
    </location>
</feature>
<feature type="mutagenesis site" description="Abolishes binding to YWHAE and YWHAZ." evidence="23 29">
    <original>S</original>
    <variation>D</variation>
    <variation>E</variation>
    <location>
        <position position="34"/>
    </location>
</feature>
<feature type="mutagenesis site" description="No effect on phosphorylation; when associated with A-44." evidence="23">
    <original>S</original>
    <variation>A</variation>
    <location>
        <position position="42"/>
    </location>
</feature>
<feature type="mutagenesis site" description="No effect on phosphorylation; when associated with A-42, or with A-30; A-31 and A-51." evidence="23">
    <original>S</original>
    <variation>A</variation>
    <location>
        <position position="44"/>
    </location>
</feature>
<feature type="mutagenesis site" description="No effect on phosphorylation; when associated with A-49. Abolishes phosphorylation; when associated with A-49; A-51 and A-53, or with A-15; A-18; A-34; A-49; A-51 and A-53." evidence="23">
    <original>S</original>
    <variation>A</variation>
    <location>
        <position position="47"/>
    </location>
</feature>
<feature type="mutagenesis site" description="No effect on phosphorylation; when associated with A-47. Abolishes phosphorylation; when associated with A-47; A-51 and A-53, or with A-15; A-18; A-34; A-47; A-51 and A-53. Abolishes glycosylation but does not affect binding to YWHAE and YWHAZ; when associated with A-30 and A-31." evidence="23 24">
    <original>S</original>
    <variation>A</variation>
    <location>
        <position position="49"/>
    </location>
</feature>
<feature type="mutagenesis site" description="No effect on phosphorylation; when associated with A-30; A-31 and A-47. Abolishes phosphorylation; when associated with A-47; A-49 and A-53, or with A-15; A-18; A-34; A-47; A-49 and A-53." evidence="23">
    <original>S</original>
    <variation>A</variation>
    <location>
        <position position="51"/>
    </location>
</feature>
<feature type="mutagenesis site" description="Abolishes phosphorylation; when associated with A-47; A-49 and A-51, or with A-15; A-18; A-34; A-47; A-49 and A-51. Abolishes binding to YWHAE and YWHAZ; when associated with A-34. No effect on caspase cleavage during apoptosis." evidence="23 28 29">
    <original>S</original>
    <variation>A</variation>
    <location>
        <position position="53"/>
    </location>
</feature>
<feature type="mutagenesis site" description="In transgenic mice, induces marked disruption of liver and pancreas keratin filament network. Increases phosphorylation and glycosylation." evidence="25">
    <original>R</original>
    <variation>C</variation>
    <variation>H</variation>
    <location>
        <position position="90"/>
    </location>
</feature>
<feature type="mutagenesis site" description="Prevents cleavage by caspase-6 during apoptosis. Induces aggregates of keratin filaments in an altered organization." evidence="28">
    <original>D</original>
    <variation>E</variation>
    <location>
        <position position="238"/>
    </location>
</feature>
<feature type="sequence conflict" description="In Ref. 5; AAH00698." evidence="30" ref="5">
    <original>Y</original>
    <variation>H</variation>
    <location>
        <position position="168"/>
    </location>
</feature>
<feature type="sequence conflict" description="In Ref. 8; CAA31369." evidence="30" ref="8">
    <original>E</original>
    <variation>Q</variation>
    <location>
        <position position="202"/>
    </location>
</feature>
<feature type="sequence conflict" description="In Ref. 3; BAD96813." evidence="30" ref="3">
    <original>E</original>
    <variation>G</variation>
    <location>
        <position position="208"/>
    </location>
</feature>
<feature type="sequence conflict" description="In Ref. 8; CAA31369." evidence="30" ref="8">
    <original>A</original>
    <variation>S</variation>
    <location>
        <position position="246"/>
    </location>
</feature>
<feature type="sequence conflict" description="In Ref. 8; CAA31369." evidence="30" ref="8">
    <original>D</original>
    <variation>R</variation>
    <location>
        <position position="309"/>
    </location>
</feature>
<feature type="sequence conflict" description="In Ref. 8; CAA31369." evidence="30" ref="8">
    <original>S</original>
    <variation>R</variation>
    <location>
        <position position="312"/>
    </location>
</feature>
<protein>
    <recommendedName>
        <fullName>Keratin, type I cytoskeletal 18</fullName>
    </recommendedName>
    <alternativeName>
        <fullName>Cell proliferation-inducing gene 46 protein</fullName>
    </alternativeName>
    <alternativeName>
        <fullName>Cytokeratin-18</fullName>
        <shortName>CK-18</shortName>
    </alternativeName>
    <alternativeName>
        <fullName>Keratin-18</fullName>
        <shortName>K18</shortName>
    </alternativeName>
</protein>